<evidence type="ECO:0000256" key="1">
    <source>
        <dbReference type="SAM" id="MobiDB-lite"/>
    </source>
</evidence>
<evidence type="ECO:0000269" key="2">
    <source>
    </source>
</evidence>
<evidence type="ECO:0000269" key="3">
    <source>
    </source>
</evidence>
<evidence type="ECO:0000303" key="4">
    <source>
    </source>
</evidence>
<evidence type="ECO:0000305" key="5"/>
<evidence type="ECO:0000305" key="6">
    <source>
    </source>
</evidence>
<evidence type="ECO:0007744" key="7">
    <source>
        <dbReference type="PDB" id="6YWS"/>
    </source>
</evidence>
<evidence type="ECO:0007744" key="8">
    <source>
        <dbReference type="PDB" id="6YWV"/>
    </source>
</evidence>
<comment type="function">
    <text evidence="6">Component of the mitochondrial ribosome (mitoribosome), a dedicated translation machinery responsible for the synthesis of mitochondrial genome-encoded proteins, including at least some of the essential transmembrane subunits of the mitochondrial respiratory chain. The mitoribosomes are attached to the mitochondrial inner membrane and translation products are cotranslationally integrated into the membrane.</text>
</comment>
<comment type="subunit">
    <text evidence="2 3">Component of the mitochondrial large ribosomal subunit (mt-LSU). Mature N.crassa 74S mitochondrial ribosomes consist of a small (37S) and a large (54S) subunit. The 37S small subunit contains a 16S ribosomal RNA (16S mt-rRNA) and 32 different proteins. The 54S large subunit contains a 23S rRNA (23S mt-rRNA) and 42 different proteins. mL57 forms a heterodimer with mL44 and stabilizes rRNA expansion segments 1/2 at a membrane-facing protuberance close to the point of attachment of the ribosome to the translocon in the membrane.</text>
</comment>
<comment type="subcellular location">
    <subcellularLocation>
        <location evidence="2 3">Mitochondrion</location>
    </subcellularLocation>
</comment>
<comment type="similarity">
    <text evidence="5">Belongs to the ribonuclease III family. Mitochondrion-specific ribosomal protein mL57 subfamily.</text>
</comment>
<reference key="1">
    <citation type="journal article" date="2003" name="Nature">
        <title>The genome sequence of the filamentous fungus Neurospora crassa.</title>
        <authorList>
            <person name="Galagan J.E."/>
            <person name="Calvo S.E."/>
            <person name="Borkovich K.A."/>
            <person name="Selker E.U."/>
            <person name="Read N.D."/>
            <person name="Jaffe D.B."/>
            <person name="FitzHugh W."/>
            <person name="Ma L.-J."/>
            <person name="Smirnov S."/>
            <person name="Purcell S."/>
            <person name="Rehman B."/>
            <person name="Elkins T."/>
            <person name="Engels R."/>
            <person name="Wang S."/>
            <person name="Nielsen C.B."/>
            <person name="Butler J."/>
            <person name="Endrizzi M."/>
            <person name="Qui D."/>
            <person name="Ianakiev P."/>
            <person name="Bell-Pedersen D."/>
            <person name="Nelson M.A."/>
            <person name="Werner-Washburne M."/>
            <person name="Selitrennikoff C.P."/>
            <person name="Kinsey J.A."/>
            <person name="Braun E.L."/>
            <person name="Zelter A."/>
            <person name="Schulte U."/>
            <person name="Kothe G.O."/>
            <person name="Jedd G."/>
            <person name="Mewes H.-W."/>
            <person name="Staben C."/>
            <person name="Marcotte E."/>
            <person name="Greenberg D."/>
            <person name="Roy A."/>
            <person name="Foley K."/>
            <person name="Naylor J."/>
            <person name="Stange-Thomann N."/>
            <person name="Barrett R."/>
            <person name="Gnerre S."/>
            <person name="Kamal M."/>
            <person name="Kamvysselis M."/>
            <person name="Mauceli E.W."/>
            <person name="Bielke C."/>
            <person name="Rudd S."/>
            <person name="Frishman D."/>
            <person name="Krystofova S."/>
            <person name="Rasmussen C."/>
            <person name="Metzenberg R.L."/>
            <person name="Perkins D.D."/>
            <person name="Kroken S."/>
            <person name="Cogoni C."/>
            <person name="Macino G."/>
            <person name="Catcheside D.E.A."/>
            <person name="Li W."/>
            <person name="Pratt R.J."/>
            <person name="Osmani S.A."/>
            <person name="DeSouza C.P.C."/>
            <person name="Glass N.L."/>
            <person name="Orbach M.J."/>
            <person name="Berglund J.A."/>
            <person name="Voelker R."/>
            <person name="Yarden O."/>
            <person name="Plamann M."/>
            <person name="Seiler S."/>
            <person name="Dunlap J.C."/>
            <person name="Radford A."/>
            <person name="Aramayo R."/>
            <person name="Natvig D.O."/>
            <person name="Alex L.A."/>
            <person name="Mannhaupt G."/>
            <person name="Ebbole D.J."/>
            <person name="Freitag M."/>
            <person name="Paulsen I."/>
            <person name="Sachs M.S."/>
            <person name="Lander E.S."/>
            <person name="Nusbaum C."/>
            <person name="Birren B.W."/>
        </authorList>
    </citation>
    <scope>NUCLEOTIDE SEQUENCE [LARGE SCALE GENOMIC DNA]</scope>
    <source>
        <strain>ATCC 24698 / 74-OR23-1A / CBS 708.71 / DSM 1257 / FGSC 987</strain>
    </source>
</reference>
<reference key="2">
    <citation type="journal article" date="2006" name="FEMS Microbiol. Lett.">
        <title>Identification and comparative analysis of the large subunit mitochondrial ribosomal proteins of Neurospora crassa.</title>
        <authorList>
            <person name="Gan X."/>
            <person name="Arita K."/>
            <person name="Isono S."/>
            <person name="Kitakawa M."/>
            <person name="Yoshino K."/>
            <person name="Yonezawa K."/>
            <person name="Kato A."/>
            <person name="Inoue H."/>
            <person name="Isono K."/>
        </authorList>
    </citation>
    <scope>IDENTIFICATION IN THE MITOCHONDRIAL RIBOSOMAL LARGE COMPLEX</scope>
    <scope>IDENTIFICATION BY MASS SPECTROMETRY</scope>
</reference>
<reference evidence="7 8" key="3">
    <citation type="journal article" date="2020" name="Nat. Commun.">
        <title>Analysis of translating mitoribosome reveals functional characteristics of translation in mitochondria of fungi.</title>
        <authorList>
            <person name="Itoh Y."/>
            <person name="Naschberger A."/>
            <person name="Mortezaei N."/>
            <person name="Herrmann J.M."/>
            <person name="Amunts A."/>
        </authorList>
    </citation>
    <scope>STRUCTURE BY ELECTRON MICROSCOPY (2.74 ANGSTROMS)</scope>
</reference>
<accession>Q7S1R6</accession>
<keyword id="KW-0002">3D-structure</keyword>
<keyword id="KW-0496">Mitochondrion</keyword>
<keyword id="KW-1185">Reference proteome</keyword>
<feature type="chain" id="PRO_0000458592" description="Large ribosomal subunit protein mL57">
    <location>
        <begin position="1"/>
        <end position="267"/>
    </location>
</feature>
<feature type="region of interest" description="Disordered" evidence="1">
    <location>
        <begin position="43"/>
        <end position="73"/>
    </location>
</feature>
<feature type="compositionally biased region" description="Low complexity" evidence="1">
    <location>
        <begin position="43"/>
        <end position="54"/>
    </location>
</feature>
<organism>
    <name type="scientific">Neurospora crassa (strain ATCC 24698 / 74-OR23-1A / CBS 708.71 / DSM 1257 / FGSC 987)</name>
    <dbReference type="NCBI Taxonomy" id="367110"/>
    <lineage>
        <taxon>Eukaryota</taxon>
        <taxon>Fungi</taxon>
        <taxon>Dikarya</taxon>
        <taxon>Ascomycota</taxon>
        <taxon>Pezizomycotina</taxon>
        <taxon>Sordariomycetes</taxon>
        <taxon>Sordariomycetidae</taxon>
        <taxon>Sordariales</taxon>
        <taxon>Sordariaceae</taxon>
        <taxon>Neurospora</taxon>
    </lineage>
</organism>
<protein>
    <recommendedName>
        <fullName evidence="4">Large ribosomal subunit protein mL57</fullName>
    </recommendedName>
</protein>
<sequence length="267" mass="29586">MAALTPSRSVFASTCKTIAQQCSRRPVAVQQLAAVPVARQVSSSSAVQQEQDASGTSSSQQPRPRWSYTPERMKGPGFSLNLVKDPRRKQWMVNSDPAKLDAFYDAFLGQGGSRMLSEETKWLAVTHKSFDYGRRGYNTRLAFLGRQIIALETTRSILTSPVLNEPIVDKYGRTPYNHAALANIDKLIYTQPLDIMDKTKIARMGIDFGLLTVMRWKPRMPEDLESSGVVVVLNSTLFAIIGAISLEKGAAVAQRIVREKILKRLGA</sequence>
<gene>
    <name type="primary">mrpl15</name>
    <name type="ORF">NCU09826</name>
</gene>
<name>RM15_NEUCR</name>
<proteinExistence type="evidence at protein level"/>
<dbReference type="EMBL" id="CM002240">
    <property type="protein sequence ID" value="EAA29289.1"/>
    <property type="molecule type" value="Genomic_DNA"/>
</dbReference>
<dbReference type="RefSeq" id="XP_958525.1">
    <property type="nucleotide sequence ID" value="XM_953432.3"/>
</dbReference>
<dbReference type="PDB" id="6YWS">
    <property type="method" value="EM"/>
    <property type="resolution" value="2.74 A"/>
    <property type="chains" value="9=1-267"/>
</dbReference>
<dbReference type="PDB" id="6YWV">
    <property type="method" value="EM"/>
    <property type="resolution" value="3.03 A"/>
    <property type="chains" value="9=1-267"/>
</dbReference>
<dbReference type="PDB" id="6YWX">
    <property type="method" value="EM"/>
    <property type="resolution" value="3.10 A"/>
    <property type="chains" value="9=1-267"/>
</dbReference>
<dbReference type="PDBsum" id="6YWS"/>
<dbReference type="PDBsum" id="6YWV"/>
<dbReference type="PDBsum" id="6YWX"/>
<dbReference type="EMDB" id="EMD-10973"/>
<dbReference type="EMDB" id="EMD-10977"/>
<dbReference type="EMDB" id="EMD-10978"/>
<dbReference type="SMR" id="Q7S1R6"/>
<dbReference type="STRING" id="367110.Q7S1R6"/>
<dbReference type="PaxDb" id="5141-EFNCRP00000009607"/>
<dbReference type="EnsemblFungi" id="EAA29289">
    <property type="protein sequence ID" value="EAA29289"/>
    <property type="gene ID" value="NCU09826"/>
</dbReference>
<dbReference type="GeneID" id="3874677"/>
<dbReference type="KEGG" id="ncr:NCU09826"/>
<dbReference type="VEuPathDB" id="FungiDB:NCU09826"/>
<dbReference type="HOGENOM" id="CLU_057354_1_0_1"/>
<dbReference type="InParanoid" id="Q7S1R6"/>
<dbReference type="OMA" id="AHTMYAV"/>
<dbReference type="OrthoDB" id="2281895at2759"/>
<dbReference type="Proteomes" id="UP000001805">
    <property type="component" value="Chromosome 2, Linkage Group V"/>
</dbReference>
<dbReference type="GO" id="GO:0005762">
    <property type="term" value="C:mitochondrial large ribosomal subunit"/>
    <property type="evidence" value="ECO:0000318"/>
    <property type="project" value="GO_Central"/>
</dbReference>
<dbReference type="GO" id="GO:0004525">
    <property type="term" value="F:ribonuclease III activity"/>
    <property type="evidence" value="ECO:0007669"/>
    <property type="project" value="InterPro"/>
</dbReference>
<dbReference type="GO" id="GO:0003735">
    <property type="term" value="F:structural constituent of ribosome"/>
    <property type="evidence" value="ECO:0000318"/>
    <property type="project" value="GO_Central"/>
</dbReference>
<dbReference type="GO" id="GO:0032543">
    <property type="term" value="P:mitochondrial translation"/>
    <property type="evidence" value="ECO:0007669"/>
    <property type="project" value="InterPro"/>
</dbReference>
<dbReference type="GO" id="GO:0006396">
    <property type="term" value="P:RNA processing"/>
    <property type="evidence" value="ECO:0007669"/>
    <property type="project" value="InterPro"/>
</dbReference>
<dbReference type="FunFam" id="1.10.1520.10:FF:000018">
    <property type="entry name" value="RNase III domain protein"/>
    <property type="match status" value="1"/>
</dbReference>
<dbReference type="Gene3D" id="1.10.1520.10">
    <property type="entry name" value="Ribonuclease III domain"/>
    <property type="match status" value="1"/>
</dbReference>
<dbReference type="InterPro" id="IPR040030">
    <property type="entry name" value="Ribosomal_mL57"/>
</dbReference>
<dbReference type="InterPro" id="IPR000999">
    <property type="entry name" value="RNase_III_dom"/>
</dbReference>
<dbReference type="InterPro" id="IPR036389">
    <property type="entry name" value="RNase_III_sf"/>
</dbReference>
<dbReference type="PANTHER" id="PTHR28160">
    <property type="entry name" value="54S RIBOSOMAL PROTEIN L15, MITOCHONDRIAL"/>
    <property type="match status" value="1"/>
</dbReference>
<dbReference type="PANTHER" id="PTHR28160:SF1">
    <property type="entry name" value="LARGE RIBOSOMAL SUBUNIT PROTEIN ML57"/>
    <property type="match status" value="1"/>
</dbReference>
<dbReference type="Pfam" id="PF14622">
    <property type="entry name" value="Ribonucleas_3_3"/>
    <property type="match status" value="1"/>
</dbReference>
<dbReference type="SUPFAM" id="SSF69065">
    <property type="entry name" value="RNase III domain-like"/>
    <property type="match status" value="1"/>
</dbReference>